<organism>
    <name type="scientific">Bacillus cereus (strain ATCC 14579 / DSM 31 / CCUG 7414 / JCM 2152 / NBRC 15305 / NCIMB 9373 / NCTC 2599 / NRRL B-3711)</name>
    <dbReference type="NCBI Taxonomy" id="226900"/>
    <lineage>
        <taxon>Bacteria</taxon>
        <taxon>Bacillati</taxon>
        <taxon>Bacillota</taxon>
        <taxon>Bacilli</taxon>
        <taxon>Bacillales</taxon>
        <taxon>Bacillaceae</taxon>
        <taxon>Bacillus</taxon>
        <taxon>Bacillus cereus group</taxon>
    </lineage>
</organism>
<protein>
    <recommendedName>
        <fullName evidence="2">S-adenosylmethionine decarboxylase proenzyme 1</fullName>
        <shortName evidence="2">AdoMetDC 1</shortName>
        <shortName evidence="2">SAMDC 1</shortName>
        <ecNumber evidence="2">4.1.1.50</ecNumber>
    </recommendedName>
    <component>
        <recommendedName>
            <fullName>S-adenosylmethionine decarboxylase 1 beta chain</fullName>
        </recommendedName>
    </component>
    <component>
        <recommendedName>
            <fullName>S-adenosylmethionine decarboxylase 1 alpha chain</fullName>
        </recommendedName>
    </component>
</protein>
<gene>
    <name evidence="2" type="primary">speH1</name>
    <name type="ordered locus">BC_4582</name>
</gene>
<evidence type="ECO:0000250" key="1"/>
<evidence type="ECO:0000255" key="2">
    <source>
        <dbReference type="HAMAP-Rule" id="MF_00464"/>
    </source>
</evidence>
<accession>Q817G9</accession>
<dbReference type="EC" id="4.1.1.50" evidence="2"/>
<dbReference type="EMBL" id="AE016877">
    <property type="protein sequence ID" value="AAP11489.1"/>
    <property type="molecule type" value="Genomic_DNA"/>
</dbReference>
<dbReference type="RefSeq" id="NP_834288.1">
    <property type="nucleotide sequence ID" value="NC_004722.1"/>
</dbReference>
<dbReference type="SMR" id="Q817G9"/>
<dbReference type="STRING" id="226900.BC_4582"/>
<dbReference type="KEGG" id="bce:BC4582"/>
<dbReference type="PATRIC" id="fig|226900.8.peg.4743"/>
<dbReference type="HOGENOM" id="CLU_125470_2_3_9"/>
<dbReference type="OrthoDB" id="9793120at2"/>
<dbReference type="UniPathway" id="UPA00331">
    <property type="reaction ID" value="UER00451"/>
</dbReference>
<dbReference type="PRO" id="PR:Q817G9"/>
<dbReference type="Proteomes" id="UP000001417">
    <property type="component" value="Chromosome"/>
</dbReference>
<dbReference type="GO" id="GO:0005829">
    <property type="term" value="C:cytosol"/>
    <property type="evidence" value="ECO:0000318"/>
    <property type="project" value="GO_Central"/>
</dbReference>
<dbReference type="GO" id="GO:0004014">
    <property type="term" value="F:adenosylmethionine decarboxylase activity"/>
    <property type="evidence" value="ECO:0000318"/>
    <property type="project" value="GO_Central"/>
</dbReference>
<dbReference type="GO" id="GO:0008295">
    <property type="term" value="P:spermidine biosynthetic process"/>
    <property type="evidence" value="ECO:0000318"/>
    <property type="project" value="GO_Central"/>
</dbReference>
<dbReference type="FunFam" id="3.30.160.750:FF:000001">
    <property type="entry name" value="S-adenosylmethionine decarboxylase proenzyme"/>
    <property type="match status" value="1"/>
</dbReference>
<dbReference type="FunFam" id="3.30.360.110:FF:000001">
    <property type="entry name" value="S-adenosylmethionine decarboxylase proenzyme"/>
    <property type="match status" value="1"/>
</dbReference>
<dbReference type="Gene3D" id="3.30.160.750">
    <property type="match status" value="1"/>
</dbReference>
<dbReference type="Gene3D" id="3.30.360.110">
    <property type="entry name" value="S-adenosylmethionine decarboxylase domain"/>
    <property type="match status" value="1"/>
</dbReference>
<dbReference type="HAMAP" id="MF_00464">
    <property type="entry name" value="AdoMetDC_1"/>
    <property type="match status" value="1"/>
</dbReference>
<dbReference type="InterPro" id="IPR042286">
    <property type="entry name" value="AdoMetDC_C"/>
</dbReference>
<dbReference type="InterPro" id="IPR003826">
    <property type="entry name" value="AdoMetDC_fam_prok"/>
</dbReference>
<dbReference type="InterPro" id="IPR042284">
    <property type="entry name" value="AdoMetDC_N"/>
</dbReference>
<dbReference type="InterPro" id="IPR016067">
    <property type="entry name" value="S-AdoMet_deCO2ase_core"/>
</dbReference>
<dbReference type="InterPro" id="IPR017716">
    <property type="entry name" value="S-AdoMet_deCOase_pro-enz"/>
</dbReference>
<dbReference type="NCBIfam" id="TIGR03330">
    <property type="entry name" value="SAM_DCase_Bsu"/>
    <property type="match status" value="1"/>
</dbReference>
<dbReference type="PANTHER" id="PTHR33866">
    <property type="entry name" value="S-ADENOSYLMETHIONINE DECARBOXYLASE PROENZYME"/>
    <property type="match status" value="1"/>
</dbReference>
<dbReference type="PANTHER" id="PTHR33866:SF2">
    <property type="entry name" value="S-ADENOSYLMETHIONINE DECARBOXYLASE PROENZYME"/>
    <property type="match status" value="1"/>
</dbReference>
<dbReference type="Pfam" id="PF02675">
    <property type="entry name" value="AdoMet_dc"/>
    <property type="match status" value="1"/>
</dbReference>
<dbReference type="SUPFAM" id="SSF56276">
    <property type="entry name" value="S-adenosylmethionine decarboxylase"/>
    <property type="match status" value="1"/>
</dbReference>
<sequence length="130" mass="14487">MDTMDTMGRHVIAELWDCDFDKLNDMPYIEQLFVDAALRAGAEVREVAFHKFAPQGVSGVVIISESHLTIHSFPEHGYASIDVYTCGDRIDPNVAAEYIAEGLNAKTRESIELPRGTGSFEIKQRETKAL</sequence>
<feature type="chain" id="PRO_0000030087" description="S-adenosylmethionine decarboxylase 1 beta chain" evidence="1">
    <location>
        <begin position="1"/>
        <end position="65"/>
    </location>
</feature>
<feature type="chain" id="PRO_0000030088" description="S-adenosylmethionine decarboxylase 1 alpha chain" evidence="1">
    <location>
        <begin position="66"/>
        <end position="130"/>
    </location>
</feature>
<feature type="active site" description="Schiff-base intermediate with substrate; via pyruvic acid" evidence="2">
    <location>
        <position position="66"/>
    </location>
</feature>
<feature type="active site" description="Proton acceptor; for processing activity" evidence="2">
    <location>
        <position position="71"/>
    </location>
</feature>
<feature type="active site" description="Proton donor; for catalytic activity" evidence="2">
    <location>
        <position position="86"/>
    </location>
</feature>
<feature type="site" description="Cleavage (non-hydrolytic); by autolysis" evidence="2">
    <location>
        <begin position="65"/>
        <end position="66"/>
    </location>
</feature>
<feature type="modified residue" description="Pyruvic acid (Ser); by autocatalysis" evidence="2">
    <location>
        <position position="66"/>
    </location>
</feature>
<name>SPEH1_BACCR</name>
<proteinExistence type="inferred from homology"/>
<reference key="1">
    <citation type="journal article" date="2003" name="Nature">
        <title>Genome sequence of Bacillus cereus and comparative analysis with Bacillus anthracis.</title>
        <authorList>
            <person name="Ivanova N."/>
            <person name="Sorokin A."/>
            <person name="Anderson I."/>
            <person name="Galleron N."/>
            <person name="Candelon B."/>
            <person name="Kapatral V."/>
            <person name="Bhattacharyya A."/>
            <person name="Reznik G."/>
            <person name="Mikhailova N."/>
            <person name="Lapidus A."/>
            <person name="Chu L."/>
            <person name="Mazur M."/>
            <person name="Goltsman E."/>
            <person name="Larsen N."/>
            <person name="D'Souza M."/>
            <person name="Walunas T."/>
            <person name="Grechkin Y."/>
            <person name="Pusch G."/>
            <person name="Haselkorn R."/>
            <person name="Fonstein M."/>
            <person name="Ehrlich S.D."/>
            <person name="Overbeek R."/>
            <person name="Kyrpides N.C."/>
        </authorList>
    </citation>
    <scope>NUCLEOTIDE SEQUENCE [LARGE SCALE GENOMIC DNA]</scope>
    <source>
        <strain>ATCC 14579 / DSM 31 / CCUG 7414 / JCM 2152 / NBRC 15305 / NCIMB 9373 / NCTC 2599 / NRRL B-3711</strain>
    </source>
</reference>
<keyword id="KW-0068">Autocatalytic cleavage</keyword>
<keyword id="KW-0210">Decarboxylase</keyword>
<keyword id="KW-0456">Lyase</keyword>
<keyword id="KW-0620">Polyamine biosynthesis</keyword>
<keyword id="KW-0670">Pyruvate</keyword>
<keyword id="KW-1185">Reference proteome</keyword>
<keyword id="KW-0949">S-adenosyl-L-methionine</keyword>
<keyword id="KW-0704">Schiff base</keyword>
<keyword id="KW-0745">Spermidine biosynthesis</keyword>
<keyword id="KW-0865">Zymogen</keyword>
<comment type="function">
    <text evidence="2">Catalyzes the decarboxylation of S-adenosylmethionine to S-adenosylmethioninamine (dcAdoMet), the propylamine donor required for the synthesis of the polyamines spermine and spermidine from the diamine putrescine.</text>
</comment>
<comment type="catalytic activity">
    <reaction evidence="2">
        <text>S-adenosyl-L-methionine + H(+) = S-adenosyl 3-(methylsulfanyl)propylamine + CO2</text>
        <dbReference type="Rhea" id="RHEA:15981"/>
        <dbReference type="ChEBI" id="CHEBI:15378"/>
        <dbReference type="ChEBI" id="CHEBI:16526"/>
        <dbReference type="ChEBI" id="CHEBI:57443"/>
        <dbReference type="ChEBI" id="CHEBI:59789"/>
        <dbReference type="EC" id="4.1.1.50"/>
    </reaction>
</comment>
<comment type="cofactor">
    <cofactor evidence="2">
        <name>pyruvate</name>
        <dbReference type="ChEBI" id="CHEBI:15361"/>
    </cofactor>
    <text evidence="2">Binds 1 pyruvoyl group covalently per subunit.</text>
</comment>
<comment type="pathway">
    <text evidence="2">Amine and polyamine biosynthesis; S-adenosylmethioninamine biosynthesis; S-adenosylmethioninamine from S-adenosyl-L-methionine: step 1/1.</text>
</comment>
<comment type="subunit">
    <text evidence="2">Heterotetramer of two alpha and two beta chains arranged as a dimer of alpha/beta heterodimers.</text>
</comment>
<comment type="PTM">
    <text evidence="2">Is synthesized initially as an inactive proenzyme. Formation of the active enzyme involves a self-maturation process in which the active site pyruvoyl group is generated from an internal serine residue via an autocatalytic post-translational modification. Two non-identical subunits are generated from the proenzyme in this reaction, and the pyruvate is formed at the N-terminus of the alpha chain, which is derived from the carboxyl end of the proenzyme. The post-translation cleavage follows an unusual pathway, termed non-hydrolytic serinolysis, in which the side chain hydroxyl group of the serine supplies its oxygen atom to form the C-terminus of the beta chain, while the remainder of the serine residue undergoes an oxidative deamination to produce ammonia and the pyruvoyl group blocking the N-terminus of the alpha chain.</text>
</comment>
<comment type="similarity">
    <text evidence="2">Belongs to the prokaryotic AdoMetDC family. Type 1 subfamily.</text>
</comment>